<protein>
    <recommendedName>
        <fullName>Alpha-glucosidase</fullName>
        <ecNumber>3.2.1.20</ecNumber>
    </recommendedName>
    <alternativeName>
        <fullName>Maltase</fullName>
    </alternativeName>
</protein>
<accession>Q9P6J3</accession>
<accession>Q4U125</accession>
<name>MALT_SCHPO</name>
<proteinExistence type="evidence at transcript level"/>
<dbReference type="EC" id="3.2.1.20"/>
<dbReference type="EMBL" id="DQ019991">
    <property type="protein sequence ID" value="AAY57566.1"/>
    <property type="molecule type" value="Genomic_DNA"/>
</dbReference>
<dbReference type="EMBL" id="CU329671">
    <property type="protein sequence ID" value="CAB91169.1"/>
    <property type="molecule type" value="Genomic_DNA"/>
</dbReference>
<dbReference type="RefSeq" id="NP_595063.1">
    <property type="nucleotide sequence ID" value="NM_001020969.2"/>
</dbReference>
<dbReference type="SMR" id="Q9P6J3"/>
<dbReference type="BioGRID" id="276520">
    <property type="interactions" value="8"/>
</dbReference>
<dbReference type="FunCoup" id="Q9P6J3">
    <property type="interactions" value="50"/>
</dbReference>
<dbReference type="STRING" id="284812.Q9P6J3"/>
<dbReference type="CAZy" id="GH13">
    <property type="family name" value="Glycoside Hydrolase Family 13"/>
</dbReference>
<dbReference type="PaxDb" id="4896-SPBC1683.07.1"/>
<dbReference type="EnsemblFungi" id="SPBC1683.07.1">
    <property type="protein sequence ID" value="SPBC1683.07.1:pep"/>
    <property type="gene ID" value="SPBC1683.07"/>
</dbReference>
<dbReference type="GeneID" id="2539976"/>
<dbReference type="KEGG" id="spo:2539976"/>
<dbReference type="PomBase" id="SPBC1683.07">
    <property type="gene designation" value="mal1"/>
</dbReference>
<dbReference type="VEuPathDB" id="FungiDB:SPBC1683.07"/>
<dbReference type="eggNOG" id="KOG0471">
    <property type="taxonomic scope" value="Eukaryota"/>
</dbReference>
<dbReference type="HOGENOM" id="CLU_006462_1_1_1"/>
<dbReference type="InParanoid" id="Q9P6J3"/>
<dbReference type="OMA" id="FDIERFW"/>
<dbReference type="PhylomeDB" id="Q9P6J3"/>
<dbReference type="PRO" id="PR:Q9P6J3"/>
<dbReference type="Proteomes" id="UP000002485">
    <property type="component" value="Chromosome II"/>
</dbReference>
<dbReference type="GO" id="GO:0005829">
    <property type="term" value="C:cytosol"/>
    <property type="evidence" value="ECO:0007005"/>
    <property type="project" value="PomBase"/>
</dbReference>
<dbReference type="GO" id="GO:0005634">
    <property type="term" value="C:nucleus"/>
    <property type="evidence" value="ECO:0007005"/>
    <property type="project" value="PomBase"/>
</dbReference>
<dbReference type="GO" id="GO:0004558">
    <property type="term" value="F:alpha-1,4-glucosidase activity"/>
    <property type="evidence" value="ECO:0000314"/>
    <property type="project" value="PomBase"/>
</dbReference>
<dbReference type="GO" id="GO:0004556">
    <property type="term" value="F:alpha-amylase activity"/>
    <property type="evidence" value="ECO:0000318"/>
    <property type="project" value="GO_Central"/>
</dbReference>
<dbReference type="GO" id="GO:0033934">
    <property type="term" value="F:glucan 1,4-alpha-maltotriohydrolase activity"/>
    <property type="evidence" value="ECO:0000318"/>
    <property type="project" value="GO_Central"/>
</dbReference>
<dbReference type="GO" id="GO:0004574">
    <property type="term" value="F:oligo-1,6-glucosidase activity"/>
    <property type="evidence" value="ECO:0000318"/>
    <property type="project" value="GO_Central"/>
</dbReference>
<dbReference type="GO" id="GO:0004575">
    <property type="term" value="F:sucrose alpha-glucosidase activity"/>
    <property type="evidence" value="ECO:0000318"/>
    <property type="project" value="GO_Central"/>
</dbReference>
<dbReference type="GO" id="GO:0000025">
    <property type="term" value="P:maltose catabolic process"/>
    <property type="evidence" value="ECO:0000318"/>
    <property type="project" value="GO_Central"/>
</dbReference>
<dbReference type="GO" id="GO:0000272">
    <property type="term" value="P:polysaccharide catabolic process"/>
    <property type="evidence" value="ECO:0000305"/>
    <property type="project" value="PomBase"/>
</dbReference>
<dbReference type="GO" id="GO:0005987">
    <property type="term" value="P:sucrose catabolic process"/>
    <property type="evidence" value="ECO:0000318"/>
    <property type="project" value="GO_Central"/>
</dbReference>
<dbReference type="CDD" id="cd11333">
    <property type="entry name" value="AmyAc_SI_OligoGlu_DGase"/>
    <property type="match status" value="1"/>
</dbReference>
<dbReference type="FunFam" id="3.20.20.80:FF:000064">
    <property type="entry name" value="Oligo-1,6-glucosidase"/>
    <property type="match status" value="1"/>
</dbReference>
<dbReference type="FunFam" id="3.20.20.80:FF:000087">
    <property type="entry name" value="Oligo-1,6-glucosidase IMA1"/>
    <property type="match status" value="1"/>
</dbReference>
<dbReference type="FunFam" id="3.90.400.10:FF:000003">
    <property type="entry name" value="Probable alpha-glucosidase (Maltase)"/>
    <property type="match status" value="1"/>
</dbReference>
<dbReference type="FunFam" id="2.60.40.1180:FF:000007">
    <property type="entry name" value="Sucrose isomerase"/>
    <property type="match status" value="1"/>
</dbReference>
<dbReference type="Gene3D" id="3.20.20.80">
    <property type="entry name" value="Glycosidases"/>
    <property type="match status" value="1"/>
</dbReference>
<dbReference type="Gene3D" id="2.60.40.1180">
    <property type="entry name" value="Golgi alpha-mannosidase II"/>
    <property type="match status" value="1"/>
</dbReference>
<dbReference type="Gene3D" id="3.90.400.10">
    <property type="entry name" value="Oligo-1,6-glucosidase, Domain 2"/>
    <property type="match status" value="1"/>
</dbReference>
<dbReference type="InterPro" id="IPR006047">
    <property type="entry name" value="Glyco_hydro_13_cat_dom"/>
</dbReference>
<dbReference type="InterPro" id="IPR013780">
    <property type="entry name" value="Glyco_hydro_b"/>
</dbReference>
<dbReference type="InterPro" id="IPR017853">
    <property type="entry name" value="Glycoside_hydrolase_SF"/>
</dbReference>
<dbReference type="InterPro" id="IPR045857">
    <property type="entry name" value="O16G_dom_2"/>
</dbReference>
<dbReference type="PANTHER" id="PTHR10357">
    <property type="entry name" value="ALPHA-AMYLASE FAMILY MEMBER"/>
    <property type="match status" value="1"/>
</dbReference>
<dbReference type="PANTHER" id="PTHR10357:SF179">
    <property type="entry name" value="NEUTRAL AND BASIC AMINO ACID TRANSPORT PROTEIN RBAT"/>
    <property type="match status" value="1"/>
</dbReference>
<dbReference type="Pfam" id="PF00128">
    <property type="entry name" value="Alpha-amylase"/>
    <property type="match status" value="1"/>
</dbReference>
<dbReference type="SMART" id="SM00642">
    <property type="entry name" value="Aamy"/>
    <property type="match status" value="1"/>
</dbReference>
<dbReference type="SUPFAM" id="SSF51445">
    <property type="entry name" value="(Trans)glycosidases"/>
    <property type="match status" value="1"/>
</dbReference>
<dbReference type="SUPFAM" id="SSF51011">
    <property type="entry name" value="Glycosyl hydrolase domain"/>
    <property type="match status" value="1"/>
</dbReference>
<evidence type="ECO:0000250" key="1"/>
<evidence type="ECO:0000269" key="2">
    <source>
    </source>
</evidence>
<evidence type="ECO:0000305" key="3"/>
<sequence length="579" mass="67752">MKVVPSEKIKPNWWRETSVYQIYPASFKDSNGDGFGDLEGIISKVDYLKALNVESIWLCPIYPSPLKDMGYDVSDYKQIDSRYGTLEDLDRLMKALHERDMKLVMDLVLNHTSDQHEWFKESRSSKTNPKRDWYFWKPARYNEKGERLPPNNWRSYFDTSAWEWDEATQEYYLHLWSVGQPDLNWETPKVREAVHDILRFWLDRGVDGFRLDAINMISKDQRFLDAPITDDRYEYQLAYQYYANGPRIHEYLNGIGNILTEYDAFSVGEMPYVLDTNEILHVVGADRRELTMIFQFDFVDLDLDPNQHKYIEGSWELSDLKKSLKKWQSALLSGGGWNASFIENHDQTRTVSRYLSDSPKYRAYSSKLMALFIIFQSGTPFVFQGQELALANIPRDWPIDEYLDVETQNFWKLFMSGNPSQEEIEKTMDIVNKRARDNGRTPMHWDSSPNGGFTKAGVKPWMRVTNDYKEWNAANQVNDPESPYTFWSKALELRKELKDAVVYGSFELISEEDPSIVAFVRESSTYKLIILLNFTGNKVSYDCPLNLTSYEILLDNYKDFICMTSPVTLNPYQAVLLKL</sequence>
<organism>
    <name type="scientific">Schizosaccharomyces pombe (strain 972 / ATCC 24843)</name>
    <name type="common">Fission yeast</name>
    <dbReference type="NCBI Taxonomy" id="284812"/>
    <lineage>
        <taxon>Eukaryota</taxon>
        <taxon>Fungi</taxon>
        <taxon>Dikarya</taxon>
        <taxon>Ascomycota</taxon>
        <taxon>Taphrinomycotina</taxon>
        <taxon>Schizosaccharomycetes</taxon>
        <taxon>Schizosaccharomycetales</taxon>
        <taxon>Schizosaccharomycetaceae</taxon>
        <taxon>Schizosaccharomyces</taxon>
    </lineage>
</organism>
<feature type="chain" id="PRO_0000310319" description="Alpha-glucosidase">
    <location>
        <begin position="1"/>
        <end position="579"/>
    </location>
</feature>
<feature type="active site" description="Nucleophile" evidence="1">
    <location>
        <position position="212"/>
    </location>
</feature>
<feature type="active site" description="Proton donor" evidence="1">
    <location>
        <position position="269"/>
    </location>
</feature>
<feature type="site" description="Transition state stabilizer" evidence="1">
    <location>
        <position position="346"/>
    </location>
</feature>
<feature type="sequence conflict" description="In Ref. 1; AAY57566." evidence="3" ref="1">
    <original>F</original>
    <variation>L</variation>
    <location>
        <position position="381"/>
    </location>
</feature>
<keyword id="KW-0326">Glycosidase</keyword>
<keyword id="KW-0378">Hydrolase</keyword>
<keyword id="KW-0462">Maltose metabolism</keyword>
<keyword id="KW-1185">Reference proteome</keyword>
<gene>
    <name type="primary">mal1</name>
    <name type="ORF">SPBC1683.07</name>
</gene>
<comment type="catalytic activity">
    <reaction>
        <text>Hydrolysis of terminal, non-reducing (1-&gt;4)-linked alpha-D-glucose residues with release of alpha-D-glucose.</text>
        <dbReference type="EC" id="3.2.1.20"/>
    </reaction>
</comment>
<comment type="induction">
    <text evidence="2">Repressed by glucose and inositol.</text>
</comment>
<comment type="similarity">
    <text evidence="3">Belongs to the glycosyl hydrolase 13 family.</text>
</comment>
<reference key="1">
    <citation type="journal article" date="2006" name="Indian J. Biochem. Biophys.">
        <title>Regulation of MAL1+ gene expression encoding maltase in Schizosaccharomyces pombe by added inositol.</title>
        <authorList>
            <person name="Yao S."/>
            <person name="Chi Z."/>
            <person name="He S."/>
        </authorList>
    </citation>
    <scope>NUCLEOTIDE SEQUENCE [GENOMIC DNA]</scope>
    <scope>REPRESSION BY GLUCOSE AND INOSITOL</scope>
</reference>
<reference key="2">
    <citation type="journal article" date="2002" name="Nature">
        <title>The genome sequence of Schizosaccharomyces pombe.</title>
        <authorList>
            <person name="Wood V."/>
            <person name="Gwilliam R."/>
            <person name="Rajandream M.A."/>
            <person name="Lyne M.H."/>
            <person name="Lyne R."/>
            <person name="Stewart A."/>
            <person name="Sgouros J.G."/>
            <person name="Peat N."/>
            <person name="Hayles J."/>
            <person name="Baker S.G."/>
            <person name="Basham D."/>
            <person name="Bowman S."/>
            <person name="Brooks K."/>
            <person name="Brown D."/>
            <person name="Brown S."/>
            <person name="Chillingworth T."/>
            <person name="Churcher C.M."/>
            <person name="Collins M."/>
            <person name="Connor R."/>
            <person name="Cronin A."/>
            <person name="Davis P."/>
            <person name="Feltwell T."/>
            <person name="Fraser A."/>
            <person name="Gentles S."/>
            <person name="Goble A."/>
            <person name="Hamlin N."/>
            <person name="Harris D.E."/>
            <person name="Hidalgo J."/>
            <person name="Hodgson G."/>
            <person name="Holroyd S."/>
            <person name="Hornsby T."/>
            <person name="Howarth S."/>
            <person name="Huckle E.J."/>
            <person name="Hunt S."/>
            <person name="Jagels K."/>
            <person name="James K.D."/>
            <person name="Jones L."/>
            <person name="Jones M."/>
            <person name="Leather S."/>
            <person name="McDonald S."/>
            <person name="McLean J."/>
            <person name="Mooney P."/>
            <person name="Moule S."/>
            <person name="Mungall K.L."/>
            <person name="Murphy L.D."/>
            <person name="Niblett D."/>
            <person name="Odell C."/>
            <person name="Oliver K."/>
            <person name="O'Neil S."/>
            <person name="Pearson D."/>
            <person name="Quail M.A."/>
            <person name="Rabbinowitsch E."/>
            <person name="Rutherford K.M."/>
            <person name="Rutter S."/>
            <person name="Saunders D."/>
            <person name="Seeger K."/>
            <person name="Sharp S."/>
            <person name="Skelton J."/>
            <person name="Simmonds M.N."/>
            <person name="Squares R."/>
            <person name="Squares S."/>
            <person name="Stevens K."/>
            <person name="Taylor K."/>
            <person name="Taylor R.G."/>
            <person name="Tivey A."/>
            <person name="Walsh S.V."/>
            <person name="Warren T."/>
            <person name="Whitehead S."/>
            <person name="Woodward J.R."/>
            <person name="Volckaert G."/>
            <person name="Aert R."/>
            <person name="Robben J."/>
            <person name="Grymonprez B."/>
            <person name="Weltjens I."/>
            <person name="Vanstreels E."/>
            <person name="Rieger M."/>
            <person name="Schaefer M."/>
            <person name="Mueller-Auer S."/>
            <person name="Gabel C."/>
            <person name="Fuchs M."/>
            <person name="Duesterhoeft A."/>
            <person name="Fritzc C."/>
            <person name="Holzer E."/>
            <person name="Moestl D."/>
            <person name="Hilbert H."/>
            <person name="Borzym K."/>
            <person name="Langer I."/>
            <person name="Beck A."/>
            <person name="Lehrach H."/>
            <person name="Reinhardt R."/>
            <person name="Pohl T.M."/>
            <person name="Eger P."/>
            <person name="Zimmermann W."/>
            <person name="Wedler H."/>
            <person name="Wambutt R."/>
            <person name="Purnelle B."/>
            <person name="Goffeau A."/>
            <person name="Cadieu E."/>
            <person name="Dreano S."/>
            <person name="Gloux S."/>
            <person name="Lelaure V."/>
            <person name="Mottier S."/>
            <person name="Galibert F."/>
            <person name="Aves S.J."/>
            <person name="Xiang Z."/>
            <person name="Hunt C."/>
            <person name="Moore K."/>
            <person name="Hurst S.M."/>
            <person name="Lucas M."/>
            <person name="Rochet M."/>
            <person name="Gaillardin C."/>
            <person name="Tallada V.A."/>
            <person name="Garzon A."/>
            <person name="Thode G."/>
            <person name="Daga R.R."/>
            <person name="Cruzado L."/>
            <person name="Jimenez J."/>
            <person name="Sanchez M."/>
            <person name="del Rey F."/>
            <person name="Benito J."/>
            <person name="Dominguez A."/>
            <person name="Revuelta J.L."/>
            <person name="Moreno S."/>
            <person name="Armstrong J."/>
            <person name="Forsburg S.L."/>
            <person name="Cerutti L."/>
            <person name="Lowe T."/>
            <person name="McCombie W.R."/>
            <person name="Paulsen I."/>
            <person name="Potashkin J."/>
            <person name="Shpakovski G.V."/>
            <person name="Ussery D."/>
            <person name="Barrell B.G."/>
            <person name="Nurse P."/>
        </authorList>
    </citation>
    <scope>NUCLEOTIDE SEQUENCE [LARGE SCALE GENOMIC DNA]</scope>
    <source>
        <strain>972 / ATCC 24843</strain>
    </source>
</reference>